<name>HCHA_ECO24</name>
<feature type="chain" id="PRO_1000064274" description="Protein/nucleic acid deglycase HchA">
    <location>
        <begin position="1"/>
        <end position="283"/>
    </location>
</feature>
<feature type="active site" description="Nucleophile" evidence="1">
    <location>
        <position position="185"/>
    </location>
</feature>
<feature type="binding site" evidence="1">
    <location>
        <position position="86"/>
    </location>
    <ligand>
        <name>Zn(2+)</name>
        <dbReference type="ChEBI" id="CHEBI:29105"/>
    </ligand>
</feature>
<feature type="binding site" evidence="1">
    <location>
        <position position="91"/>
    </location>
    <ligand>
        <name>Zn(2+)</name>
        <dbReference type="ChEBI" id="CHEBI:29105"/>
    </ligand>
</feature>
<feature type="binding site" evidence="1">
    <location>
        <position position="123"/>
    </location>
    <ligand>
        <name>Zn(2+)</name>
        <dbReference type="ChEBI" id="CHEBI:29105"/>
    </ligand>
</feature>
<keyword id="KW-0963">Cytoplasm</keyword>
<keyword id="KW-0227">DNA damage</keyword>
<keyword id="KW-0234">DNA repair</keyword>
<keyword id="KW-0378">Hydrolase</keyword>
<keyword id="KW-0479">Metal-binding</keyword>
<keyword id="KW-1185">Reference proteome</keyword>
<keyword id="KW-0346">Stress response</keyword>
<keyword id="KW-0862">Zinc</keyword>
<comment type="function">
    <text evidence="1">Protein and nucleotide deglycase that catalyzes the deglycation of the Maillard adducts formed between amino groups of proteins or nucleotides and reactive carbonyl groups of glyoxals. Thus, functions as a protein deglycase that repairs methylglyoxal- and glyoxal-glycated proteins, and releases repaired proteins and lactate or glycolate, respectively. Deglycates cysteine, arginine and lysine residues in proteins, and thus reactivates these proteins by reversing glycation by glyoxals. Acts on early glycation intermediates (hemithioacetals and aminocarbinols), preventing the formation of Schiff bases and advanced glycation endproducts (AGE). Also functions as a nucleotide deglycase able to repair glycated guanine in the free nucleotide pool (GTP, GDP, GMP, dGTP) and in DNA and RNA. Is thus involved in a major nucleotide repair system named guanine glycation repair (GG repair), dedicated to reversing methylglyoxal and glyoxal damage via nucleotide sanitization and direct nucleic acid repair. Plays an important role in protecting cells from carbonyl stress.</text>
</comment>
<comment type="catalytic activity">
    <reaction evidence="1">
        <text>N(omega)-(1-hydroxy-2-oxopropyl)-L-arginyl-[protein] + H2O = lactate + L-arginyl-[protein] + H(+)</text>
        <dbReference type="Rhea" id="RHEA:49548"/>
        <dbReference type="Rhea" id="RHEA-COMP:10532"/>
        <dbReference type="Rhea" id="RHEA-COMP:12428"/>
        <dbReference type="ChEBI" id="CHEBI:15377"/>
        <dbReference type="ChEBI" id="CHEBI:15378"/>
        <dbReference type="ChEBI" id="CHEBI:24996"/>
        <dbReference type="ChEBI" id="CHEBI:29965"/>
        <dbReference type="ChEBI" id="CHEBI:131708"/>
        <dbReference type="EC" id="3.5.1.124"/>
    </reaction>
</comment>
<comment type="catalytic activity">
    <reaction evidence="1">
        <text>N(6)-(1-hydroxy-2-oxopropyl)-L-lysyl-[protein] + H2O = lactate + L-lysyl-[protein] + H(+)</text>
        <dbReference type="Rhea" id="RHEA:49552"/>
        <dbReference type="Rhea" id="RHEA-COMP:9752"/>
        <dbReference type="Rhea" id="RHEA-COMP:12429"/>
        <dbReference type="ChEBI" id="CHEBI:15377"/>
        <dbReference type="ChEBI" id="CHEBI:15378"/>
        <dbReference type="ChEBI" id="CHEBI:24996"/>
        <dbReference type="ChEBI" id="CHEBI:29969"/>
        <dbReference type="ChEBI" id="CHEBI:131709"/>
        <dbReference type="EC" id="3.5.1.124"/>
    </reaction>
</comment>
<comment type="catalytic activity">
    <reaction evidence="1">
        <text>S-(1-hydroxy-2-oxopropyl)-L-cysteinyl-[protein] + H2O = lactate + L-cysteinyl-[protein] + H(+)</text>
        <dbReference type="Rhea" id="RHEA:49556"/>
        <dbReference type="Rhea" id="RHEA-COMP:10131"/>
        <dbReference type="Rhea" id="RHEA-COMP:12430"/>
        <dbReference type="ChEBI" id="CHEBI:15377"/>
        <dbReference type="ChEBI" id="CHEBI:15378"/>
        <dbReference type="ChEBI" id="CHEBI:24996"/>
        <dbReference type="ChEBI" id="CHEBI:29950"/>
        <dbReference type="ChEBI" id="CHEBI:131710"/>
        <dbReference type="EC" id="3.5.1.124"/>
    </reaction>
</comment>
<comment type="catalytic activity">
    <reaction evidence="1">
        <text>N(omega)-(1-hydroxy-2-oxoethyl)-L-arginyl-[protein] + H2O = L-arginyl-[protein] + glycolate + H(+)</text>
        <dbReference type="Rhea" id="RHEA:57188"/>
        <dbReference type="Rhea" id="RHEA-COMP:10532"/>
        <dbReference type="Rhea" id="RHEA-COMP:14844"/>
        <dbReference type="ChEBI" id="CHEBI:15377"/>
        <dbReference type="ChEBI" id="CHEBI:15378"/>
        <dbReference type="ChEBI" id="CHEBI:29805"/>
        <dbReference type="ChEBI" id="CHEBI:29965"/>
        <dbReference type="ChEBI" id="CHEBI:141553"/>
        <dbReference type="EC" id="3.5.1.124"/>
    </reaction>
</comment>
<comment type="catalytic activity">
    <reaction evidence="1">
        <text>N(6)-(1-hydroxy-2-oxoethyl)-L-lysyl-[protein] + H2O = glycolate + L-lysyl-[protein] + H(+)</text>
        <dbReference type="Rhea" id="RHEA:57192"/>
        <dbReference type="Rhea" id="RHEA-COMP:9752"/>
        <dbReference type="Rhea" id="RHEA-COMP:14845"/>
        <dbReference type="ChEBI" id="CHEBI:15377"/>
        <dbReference type="ChEBI" id="CHEBI:15378"/>
        <dbReference type="ChEBI" id="CHEBI:29805"/>
        <dbReference type="ChEBI" id="CHEBI:29969"/>
        <dbReference type="ChEBI" id="CHEBI:141554"/>
        <dbReference type="EC" id="3.5.1.124"/>
    </reaction>
</comment>
<comment type="catalytic activity">
    <reaction evidence="1">
        <text>S-(1-hydroxy-2-oxoethyl)-L-cysteinyl-[protein] + H2O = glycolate + L-cysteinyl-[protein] + H(+)</text>
        <dbReference type="Rhea" id="RHEA:57196"/>
        <dbReference type="Rhea" id="RHEA-COMP:10131"/>
        <dbReference type="Rhea" id="RHEA-COMP:14846"/>
        <dbReference type="ChEBI" id="CHEBI:15377"/>
        <dbReference type="ChEBI" id="CHEBI:15378"/>
        <dbReference type="ChEBI" id="CHEBI:29805"/>
        <dbReference type="ChEBI" id="CHEBI:29950"/>
        <dbReference type="ChEBI" id="CHEBI:141555"/>
        <dbReference type="EC" id="3.5.1.124"/>
    </reaction>
</comment>
<comment type="catalytic activity">
    <reaction evidence="1">
        <text>N(2)-(1-hydroxy-2-oxopropyl)-dGTP + H2O = lactate + dGTP + H(+)</text>
        <dbReference type="Rhea" id="RHEA:57244"/>
        <dbReference type="ChEBI" id="CHEBI:15377"/>
        <dbReference type="ChEBI" id="CHEBI:15378"/>
        <dbReference type="ChEBI" id="CHEBI:24996"/>
        <dbReference type="ChEBI" id="CHEBI:61429"/>
        <dbReference type="ChEBI" id="CHEBI:141569"/>
    </reaction>
</comment>
<comment type="catalytic activity">
    <reaction evidence="1">
        <text>N(2)-(1-hydroxy-2-oxopropyl)-GTP + H2O = lactate + GTP + H(+)</text>
        <dbReference type="Rhea" id="RHEA:57256"/>
        <dbReference type="ChEBI" id="CHEBI:15377"/>
        <dbReference type="ChEBI" id="CHEBI:15378"/>
        <dbReference type="ChEBI" id="CHEBI:24996"/>
        <dbReference type="ChEBI" id="CHEBI:37565"/>
        <dbReference type="ChEBI" id="CHEBI:141570"/>
    </reaction>
</comment>
<comment type="catalytic activity">
    <reaction evidence="1">
        <text>N(2)-(1-hydroxy-2-oxopropyl)-GDP + H2O = lactate + GDP + H(+)</text>
        <dbReference type="Rhea" id="RHEA:57260"/>
        <dbReference type="ChEBI" id="CHEBI:15377"/>
        <dbReference type="ChEBI" id="CHEBI:15378"/>
        <dbReference type="ChEBI" id="CHEBI:24996"/>
        <dbReference type="ChEBI" id="CHEBI:58189"/>
        <dbReference type="ChEBI" id="CHEBI:141573"/>
    </reaction>
</comment>
<comment type="catalytic activity">
    <reaction evidence="1">
        <text>N(2)-(1-hydroxy-2-oxopropyl)-GMP + H2O = lactate + GMP + H(+)</text>
        <dbReference type="Rhea" id="RHEA:57268"/>
        <dbReference type="ChEBI" id="CHEBI:15377"/>
        <dbReference type="ChEBI" id="CHEBI:15378"/>
        <dbReference type="ChEBI" id="CHEBI:24996"/>
        <dbReference type="ChEBI" id="CHEBI:58115"/>
        <dbReference type="ChEBI" id="CHEBI:141575"/>
    </reaction>
</comment>
<comment type="catalytic activity">
    <reaction evidence="1">
        <text>N(2)-(1-hydroxy-2-oxoethyl)-dGTP + H2O = dGTP + glycolate + H(+)</text>
        <dbReference type="Rhea" id="RHEA:57248"/>
        <dbReference type="ChEBI" id="CHEBI:15377"/>
        <dbReference type="ChEBI" id="CHEBI:15378"/>
        <dbReference type="ChEBI" id="CHEBI:29805"/>
        <dbReference type="ChEBI" id="CHEBI:61429"/>
        <dbReference type="ChEBI" id="CHEBI:141572"/>
    </reaction>
</comment>
<comment type="catalytic activity">
    <reaction evidence="1">
        <text>N(2)-(1-hydroxy-2-oxoethyl)-GTP + H2O = glycolate + GTP + H(+)</text>
        <dbReference type="Rhea" id="RHEA:57252"/>
        <dbReference type="ChEBI" id="CHEBI:15377"/>
        <dbReference type="ChEBI" id="CHEBI:15378"/>
        <dbReference type="ChEBI" id="CHEBI:29805"/>
        <dbReference type="ChEBI" id="CHEBI:37565"/>
        <dbReference type="ChEBI" id="CHEBI:141571"/>
    </reaction>
</comment>
<comment type="catalytic activity">
    <reaction evidence="1">
        <text>N(2)-(1-hydroxy-2-oxoethyl)-GDP + H2O = glycolate + GDP + H(+)</text>
        <dbReference type="Rhea" id="RHEA:57264"/>
        <dbReference type="ChEBI" id="CHEBI:15377"/>
        <dbReference type="ChEBI" id="CHEBI:15378"/>
        <dbReference type="ChEBI" id="CHEBI:29805"/>
        <dbReference type="ChEBI" id="CHEBI:58189"/>
        <dbReference type="ChEBI" id="CHEBI:141574"/>
    </reaction>
</comment>
<comment type="catalytic activity">
    <reaction evidence="1">
        <text>N(2)-(1-hydroxy-2-oxoethyl)-GMP + H2O = glycolate + GMP + H(+)</text>
        <dbReference type="Rhea" id="RHEA:57304"/>
        <dbReference type="ChEBI" id="CHEBI:15377"/>
        <dbReference type="ChEBI" id="CHEBI:15378"/>
        <dbReference type="ChEBI" id="CHEBI:29805"/>
        <dbReference type="ChEBI" id="CHEBI:58115"/>
        <dbReference type="ChEBI" id="CHEBI:141576"/>
    </reaction>
</comment>
<comment type="catalytic activity">
    <reaction evidence="1">
        <text>an N(2)-(1-hydroxy-2-oxopropyl)-guanosine in RNA + H2O = a guanosine in RNA + lactate + H(+)</text>
        <dbReference type="Rhea" id="RHEA:57288"/>
        <dbReference type="Rhea" id="RHEA-COMP:14855"/>
        <dbReference type="Rhea" id="RHEA-COMP:14858"/>
        <dbReference type="ChEBI" id="CHEBI:15377"/>
        <dbReference type="ChEBI" id="CHEBI:15378"/>
        <dbReference type="ChEBI" id="CHEBI:24996"/>
        <dbReference type="ChEBI" id="CHEBI:74269"/>
        <dbReference type="ChEBI" id="CHEBI:141580"/>
    </reaction>
</comment>
<comment type="catalytic activity">
    <reaction evidence="1">
        <text>an N(2)-(1-hydroxy-2-oxopropyl)-2'-deoxyguanosine in DNA + H2O = a 2'-deoxyguanosine in DNA + lactate + H(+)</text>
        <dbReference type="Rhea" id="RHEA:57300"/>
        <dbReference type="Rhea" id="RHEA-COMP:11367"/>
        <dbReference type="Rhea" id="RHEA-COMP:14856"/>
        <dbReference type="ChEBI" id="CHEBI:15377"/>
        <dbReference type="ChEBI" id="CHEBI:15378"/>
        <dbReference type="ChEBI" id="CHEBI:24996"/>
        <dbReference type="ChEBI" id="CHEBI:85445"/>
        <dbReference type="ChEBI" id="CHEBI:141578"/>
    </reaction>
</comment>
<comment type="catalytic activity">
    <reaction evidence="1">
        <text>an N(2)-(1-hydroxy-2-oxoethyl)-guanosine in RNA + H2O = a guanosine in RNA + glycolate + H(+)</text>
        <dbReference type="Rhea" id="RHEA:57292"/>
        <dbReference type="Rhea" id="RHEA-COMP:14855"/>
        <dbReference type="Rhea" id="RHEA-COMP:14859"/>
        <dbReference type="ChEBI" id="CHEBI:15377"/>
        <dbReference type="ChEBI" id="CHEBI:15378"/>
        <dbReference type="ChEBI" id="CHEBI:29805"/>
        <dbReference type="ChEBI" id="CHEBI:74269"/>
        <dbReference type="ChEBI" id="CHEBI:141581"/>
    </reaction>
</comment>
<comment type="catalytic activity">
    <reaction evidence="1">
        <text>an N(2)-(1-hydroxy-2-oxoethyl)-2'-deoxyguanosine in DNA + H2O = a 2'-deoxyguanosine in DNA + glycolate + H(+)</text>
        <dbReference type="Rhea" id="RHEA:57296"/>
        <dbReference type="Rhea" id="RHEA-COMP:11367"/>
        <dbReference type="Rhea" id="RHEA-COMP:14857"/>
        <dbReference type="ChEBI" id="CHEBI:15377"/>
        <dbReference type="ChEBI" id="CHEBI:15378"/>
        <dbReference type="ChEBI" id="CHEBI:29805"/>
        <dbReference type="ChEBI" id="CHEBI:85445"/>
        <dbReference type="ChEBI" id="CHEBI:141579"/>
    </reaction>
</comment>
<comment type="subunit">
    <text evidence="1">Homodimer.</text>
</comment>
<comment type="subcellular location">
    <subcellularLocation>
        <location evidence="1">Cytoplasm</location>
    </subcellularLocation>
</comment>
<comment type="induction">
    <text evidence="1">By heat shock.</text>
</comment>
<comment type="similarity">
    <text evidence="1">Belongs to the peptidase C56 family. HchA subfamily.</text>
</comment>
<proteinExistence type="inferred from homology"/>
<dbReference type="EC" id="3.1.2.-" evidence="1"/>
<dbReference type="EC" id="3.5.1.-" evidence="1"/>
<dbReference type="EC" id="3.5.1.124" evidence="1"/>
<dbReference type="EMBL" id="CP000800">
    <property type="protein sequence ID" value="ABV17409.1"/>
    <property type="molecule type" value="Genomic_DNA"/>
</dbReference>
<dbReference type="RefSeq" id="WP_000218209.1">
    <property type="nucleotide sequence ID" value="NC_009801.1"/>
</dbReference>
<dbReference type="SMR" id="A7ZN88"/>
<dbReference type="MEROPS" id="C56.006"/>
<dbReference type="KEGG" id="ecw:EcE24377A_2198"/>
<dbReference type="HOGENOM" id="CLU_066933_0_0_6"/>
<dbReference type="Proteomes" id="UP000001122">
    <property type="component" value="Chromosome"/>
</dbReference>
<dbReference type="GO" id="GO:0005737">
    <property type="term" value="C:cytoplasm"/>
    <property type="evidence" value="ECO:0007669"/>
    <property type="project" value="UniProtKB-SubCell"/>
</dbReference>
<dbReference type="GO" id="GO:0019172">
    <property type="term" value="F:glyoxalase III activity"/>
    <property type="evidence" value="ECO:0007669"/>
    <property type="project" value="TreeGrafter"/>
</dbReference>
<dbReference type="GO" id="GO:0036524">
    <property type="term" value="F:protein deglycase activity"/>
    <property type="evidence" value="ECO:0007669"/>
    <property type="project" value="UniProtKB-UniRule"/>
</dbReference>
<dbReference type="GO" id="GO:0016790">
    <property type="term" value="F:thiolester hydrolase activity"/>
    <property type="evidence" value="ECO:0007669"/>
    <property type="project" value="UniProtKB-UniRule"/>
</dbReference>
<dbReference type="GO" id="GO:0008270">
    <property type="term" value="F:zinc ion binding"/>
    <property type="evidence" value="ECO:0007669"/>
    <property type="project" value="UniProtKB-UniRule"/>
</dbReference>
<dbReference type="GO" id="GO:0006281">
    <property type="term" value="P:DNA repair"/>
    <property type="evidence" value="ECO:0007669"/>
    <property type="project" value="UniProtKB-UniRule"/>
</dbReference>
<dbReference type="GO" id="GO:0019243">
    <property type="term" value="P:methylglyoxal catabolic process to D-lactate via S-lactoyl-glutathione"/>
    <property type="evidence" value="ECO:0007669"/>
    <property type="project" value="TreeGrafter"/>
</dbReference>
<dbReference type="GO" id="GO:0030091">
    <property type="term" value="P:protein repair"/>
    <property type="evidence" value="ECO:0007669"/>
    <property type="project" value="UniProtKB-UniRule"/>
</dbReference>
<dbReference type="FunFam" id="3.40.50.880:FF:000026">
    <property type="entry name" value="Protein/nucleic acid deglycase HchA"/>
    <property type="match status" value="1"/>
</dbReference>
<dbReference type="Gene3D" id="3.40.50.880">
    <property type="match status" value="1"/>
</dbReference>
<dbReference type="HAMAP" id="MF_01046">
    <property type="entry name" value="Deglycase_HchA"/>
    <property type="match status" value="1"/>
</dbReference>
<dbReference type="InterPro" id="IPR029062">
    <property type="entry name" value="Class_I_gatase-like"/>
</dbReference>
<dbReference type="InterPro" id="IPR017283">
    <property type="entry name" value="HchA"/>
</dbReference>
<dbReference type="InterPro" id="IPR050325">
    <property type="entry name" value="Prot/Nucl_acid_deglycase"/>
</dbReference>
<dbReference type="NCBIfam" id="NF003168">
    <property type="entry name" value="PRK04155.1"/>
    <property type="match status" value="1"/>
</dbReference>
<dbReference type="PANTHER" id="PTHR48094">
    <property type="entry name" value="PROTEIN/NUCLEIC ACID DEGLYCASE DJ-1-RELATED"/>
    <property type="match status" value="1"/>
</dbReference>
<dbReference type="PANTHER" id="PTHR48094:SF20">
    <property type="entry name" value="PROTEIN_NUCLEIC ACID DEGLYCASE 1"/>
    <property type="match status" value="1"/>
</dbReference>
<dbReference type="PIRSF" id="PIRSF037798">
    <property type="entry name" value="Chaperone_HchA"/>
    <property type="match status" value="1"/>
</dbReference>
<dbReference type="SUPFAM" id="SSF52317">
    <property type="entry name" value="Class I glutamine amidotransferase-like"/>
    <property type="match status" value="1"/>
</dbReference>
<gene>
    <name evidence="1" type="primary">hchA</name>
    <name type="ordered locus">EcE24377A_2198</name>
</gene>
<evidence type="ECO:0000255" key="1">
    <source>
        <dbReference type="HAMAP-Rule" id="MF_01046"/>
    </source>
</evidence>
<reference key="1">
    <citation type="journal article" date="2008" name="J. Bacteriol.">
        <title>The pangenome structure of Escherichia coli: comparative genomic analysis of E. coli commensal and pathogenic isolates.</title>
        <authorList>
            <person name="Rasko D.A."/>
            <person name="Rosovitz M.J."/>
            <person name="Myers G.S.A."/>
            <person name="Mongodin E.F."/>
            <person name="Fricke W.F."/>
            <person name="Gajer P."/>
            <person name="Crabtree J."/>
            <person name="Sebaihia M."/>
            <person name="Thomson N.R."/>
            <person name="Chaudhuri R."/>
            <person name="Henderson I.R."/>
            <person name="Sperandio V."/>
            <person name="Ravel J."/>
        </authorList>
    </citation>
    <scope>NUCLEOTIDE SEQUENCE [LARGE SCALE GENOMIC DNA]</scope>
    <source>
        <strain>E24377A / ETEC</strain>
    </source>
</reference>
<accession>A7ZN88</accession>
<protein>
    <recommendedName>
        <fullName evidence="1">Protein/nucleic acid deglycase HchA</fullName>
        <ecNumber evidence="1">3.1.2.-</ecNumber>
        <ecNumber evidence="1">3.5.1.-</ecNumber>
        <ecNumber evidence="1">3.5.1.124</ecNumber>
    </recommendedName>
    <alternativeName>
        <fullName evidence="1">Maillard deglycase</fullName>
    </alternativeName>
</protein>
<sequence length="283" mass="31146">MTVQTSKNPQVDIAEDNAFFPSEYSLSQYTSPVSDLDGVDYPKPYRGKHKILVIAADERYLPTDNGKLFSTGNHPIETLLPLYHLHAAGFEFEVATISGLMTKFEYWAMPHKDEKVMPFFEQHKSLFRNPKKLADVVASLNADSEYAAIFVPGGHGALIGLPESQDVAAALQWAIKNDRFVISLCHGPAAFLALRHGDNPLNGYSICAFPDAADKQTPEIGYMPGHLTWYFGEELKKMGMNIINDDIAGRVHKDRKVLTGDSPFAANALGKLAAQEMLAAYAG</sequence>
<organism>
    <name type="scientific">Escherichia coli O139:H28 (strain E24377A / ETEC)</name>
    <dbReference type="NCBI Taxonomy" id="331111"/>
    <lineage>
        <taxon>Bacteria</taxon>
        <taxon>Pseudomonadati</taxon>
        <taxon>Pseudomonadota</taxon>
        <taxon>Gammaproteobacteria</taxon>
        <taxon>Enterobacterales</taxon>
        <taxon>Enterobacteriaceae</taxon>
        <taxon>Escherichia</taxon>
    </lineage>
</organism>